<dbReference type="EC" id="3.5.4.16" evidence="1"/>
<dbReference type="EMBL" id="CP001185">
    <property type="protein sequence ID" value="ACJ75811.1"/>
    <property type="molecule type" value="Genomic_DNA"/>
</dbReference>
<dbReference type="RefSeq" id="WP_012580182.1">
    <property type="nucleotide sequence ID" value="NC_011653.1"/>
</dbReference>
<dbReference type="SMR" id="B7ICT4"/>
<dbReference type="STRING" id="484019.THA_1366"/>
<dbReference type="KEGG" id="taf:THA_1366"/>
<dbReference type="eggNOG" id="COG1469">
    <property type="taxonomic scope" value="Bacteria"/>
</dbReference>
<dbReference type="HOGENOM" id="CLU_062816_1_1_0"/>
<dbReference type="OrthoDB" id="9774824at2"/>
<dbReference type="UniPathway" id="UPA00848">
    <property type="reaction ID" value="UER00151"/>
</dbReference>
<dbReference type="Proteomes" id="UP000002453">
    <property type="component" value="Chromosome"/>
</dbReference>
<dbReference type="GO" id="GO:0003934">
    <property type="term" value="F:GTP cyclohydrolase I activity"/>
    <property type="evidence" value="ECO:0007669"/>
    <property type="project" value="UniProtKB-UniRule"/>
</dbReference>
<dbReference type="GO" id="GO:0046654">
    <property type="term" value="P:tetrahydrofolate biosynthetic process"/>
    <property type="evidence" value="ECO:0007669"/>
    <property type="project" value="UniProtKB-UniRule"/>
</dbReference>
<dbReference type="Gene3D" id="3.10.270.10">
    <property type="entry name" value="Urate Oxidase"/>
    <property type="match status" value="1"/>
</dbReference>
<dbReference type="HAMAP" id="MF_01527_B">
    <property type="entry name" value="GTP_cyclohydrol_B"/>
    <property type="match status" value="1"/>
</dbReference>
<dbReference type="InterPro" id="IPR022838">
    <property type="entry name" value="GTP_cyclohydrolase_FolE2"/>
</dbReference>
<dbReference type="InterPro" id="IPR003801">
    <property type="entry name" value="GTP_cyclohydrolase_FolE2/MptA"/>
</dbReference>
<dbReference type="NCBIfam" id="NF010200">
    <property type="entry name" value="PRK13674.1-1"/>
    <property type="match status" value="1"/>
</dbReference>
<dbReference type="PANTHER" id="PTHR36445">
    <property type="entry name" value="GTP CYCLOHYDROLASE MPTA"/>
    <property type="match status" value="1"/>
</dbReference>
<dbReference type="PANTHER" id="PTHR36445:SF1">
    <property type="entry name" value="GTP CYCLOHYDROLASE MPTA"/>
    <property type="match status" value="1"/>
</dbReference>
<dbReference type="Pfam" id="PF02649">
    <property type="entry name" value="GCHY-1"/>
    <property type="match status" value="1"/>
</dbReference>
<name>GCH4_THEAB</name>
<feature type="chain" id="PRO_1000185158" description="GTP cyclohydrolase FolE2">
    <location>
        <begin position="1"/>
        <end position="259"/>
    </location>
</feature>
<feature type="site" description="May be catalytically important" evidence="1">
    <location>
        <position position="145"/>
    </location>
</feature>
<proteinExistence type="inferred from homology"/>
<evidence type="ECO:0000255" key="1">
    <source>
        <dbReference type="HAMAP-Rule" id="MF_01527"/>
    </source>
</evidence>
<reference key="1">
    <citation type="journal article" date="2009" name="J. Bacteriol.">
        <title>The genome of Thermosipho africanus TCF52B: lateral genetic connections to the Firmicutes and Archaea.</title>
        <authorList>
            <person name="Nesboe C.L."/>
            <person name="Bapteste E."/>
            <person name="Curtis B."/>
            <person name="Dahle H."/>
            <person name="Lopez P."/>
            <person name="Macleod D."/>
            <person name="Dlutek M."/>
            <person name="Bowman S."/>
            <person name="Zhaxybayeva O."/>
            <person name="Birkeland N.-K."/>
            <person name="Doolittle W.F."/>
        </authorList>
    </citation>
    <scope>NUCLEOTIDE SEQUENCE [LARGE SCALE GENOMIC DNA]</scope>
    <source>
        <strain>TCF52B</strain>
    </source>
</reference>
<keyword id="KW-0378">Hydrolase</keyword>
<keyword id="KW-1185">Reference proteome</keyword>
<organism>
    <name type="scientific">Thermosipho africanus (strain TCF52B)</name>
    <dbReference type="NCBI Taxonomy" id="484019"/>
    <lineage>
        <taxon>Bacteria</taxon>
        <taxon>Thermotogati</taxon>
        <taxon>Thermotogota</taxon>
        <taxon>Thermotogae</taxon>
        <taxon>Thermotogales</taxon>
        <taxon>Fervidobacteriaceae</taxon>
        <taxon>Thermosipho</taxon>
    </lineage>
</organism>
<gene>
    <name evidence="1" type="primary">folE2</name>
    <name type="ordered locus">THA_1366</name>
</gene>
<sequence length="259" mass="30260">MRDVQSERDERNVPLKHVGIKNLKYPVVVLDKKNKNQHTIAEINMYVDLPKDFRGTHMSRFLEVLNKFHLKIDPKNIKAILDDLKKTLKAQSASIEIMFPYFLQKKAPVTKIESYMEYKCGFKAYDTNEECEFYIVVEVPIQTLCPCSKEISKYNAHNQRALARIEVETSELIWFEDLIELAESSASVPLFTLLKRPDEKYVTEKAYENPKFVEDVARDIALSLKENKKIRWFKVEVESFESIHNHNAYACVNSDTMEV</sequence>
<accession>B7ICT4</accession>
<comment type="function">
    <text evidence="1">Converts GTP to 7,8-dihydroneopterin triphosphate.</text>
</comment>
<comment type="catalytic activity">
    <reaction evidence="1">
        <text>GTP + H2O = 7,8-dihydroneopterin 3'-triphosphate + formate + H(+)</text>
        <dbReference type="Rhea" id="RHEA:17473"/>
        <dbReference type="ChEBI" id="CHEBI:15377"/>
        <dbReference type="ChEBI" id="CHEBI:15378"/>
        <dbReference type="ChEBI" id="CHEBI:15740"/>
        <dbReference type="ChEBI" id="CHEBI:37565"/>
        <dbReference type="ChEBI" id="CHEBI:58462"/>
        <dbReference type="EC" id="3.5.4.16"/>
    </reaction>
</comment>
<comment type="pathway">
    <text evidence="1">Cofactor biosynthesis; 7,8-dihydroneopterin triphosphate biosynthesis; 7,8-dihydroneopterin triphosphate from GTP: step 1/1.</text>
</comment>
<comment type="similarity">
    <text evidence="1">Belongs to the GTP cyclohydrolase IV family.</text>
</comment>
<protein>
    <recommendedName>
        <fullName evidence="1">GTP cyclohydrolase FolE2</fullName>
        <ecNumber evidence="1">3.5.4.16</ecNumber>
    </recommendedName>
</protein>